<dbReference type="EC" id="5.6.1.7" evidence="1"/>
<dbReference type="EMBL" id="AE003849">
    <property type="protein sequence ID" value="AAF83425.1"/>
    <property type="molecule type" value="Genomic_DNA"/>
</dbReference>
<dbReference type="PIR" id="F82783">
    <property type="entry name" value="F82783"/>
</dbReference>
<dbReference type="RefSeq" id="WP_010893140.1">
    <property type="nucleotide sequence ID" value="NC_002488.3"/>
</dbReference>
<dbReference type="SMR" id="Q9PFP2"/>
<dbReference type="STRING" id="160492.XF_0615"/>
<dbReference type="KEGG" id="xfa:XF_0615"/>
<dbReference type="eggNOG" id="COG0459">
    <property type="taxonomic scope" value="Bacteria"/>
</dbReference>
<dbReference type="HOGENOM" id="CLU_016503_3_0_6"/>
<dbReference type="Proteomes" id="UP000000812">
    <property type="component" value="Chromosome"/>
</dbReference>
<dbReference type="GO" id="GO:0005737">
    <property type="term" value="C:cytoplasm"/>
    <property type="evidence" value="ECO:0007669"/>
    <property type="project" value="UniProtKB-SubCell"/>
</dbReference>
<dbReference type="GO" id="GO:0005524">
    <property type="term" value="F:ATP binding"/>
    <property type="evidence" value="ECO:0007669"/>
    <property type="project" value="UniProtKB-UniRule"/>
</dbReference>
<dbReference type="GO" id="GO:0140662">
    <property type="term" value="F:ATP-dependent protein folding chaperone"/>
    <property type="evidence" value="ECO:0007669"/>
    <property type="project" value="InterPro"/>
</dbReference>
<dbReference type="GO" id="GO:0016853">
    <property type="term" value="F:isomerase activity"/>
    <property type="evidence" value="ECO:0007669"/>
    <property type="project" value="UniProtKB-KW"/>
</dbReference>
<dbReference type="GO" id="GO:0051082">
    <property type="term" value="F:unfolded protein binding"/>
    <property type="evidence" value="ECO:0007669"/>
    <property type="project" value="UniProtKB-UniRule"/>
</dbReference>
<dbReference type="GO" id="GO:0042026">
    <property type="term" value="P:protein refolding"/>
    <property type="evidence" value="ECO:0007669"/>
    <property type="project" value="UniProtKB-UniRule"/>
</dbReference>
<dbReference type="CDD" id="cd03344">
    <property type="entry name" value="GroEL"/>
    <property type="match status" value="1"/>
</dbReference>
<dbReference type="FunFam" id="1.10.560.10:FF:000001">
    <property type="entry name" value="60 kDa chaperonin"/>
    <property type="match status" value="1"/>
</dbReference>
<dbReference type="FunFam" id="3.50.7.10:FF:000001">
    <property type="entry name" value="60 kDa chaperonin"/>
    <property type="match status" value="1"/>
</dbReference>
<dbReference type="Gene3D" id="3.50.7.10">
    <property type="entry name" value="GroEL"/>
    <property type="match status" value="1"/>
</dbReference>
<dbReference type="Gene3D" id="1.10.560.10">
    <property type="entry name" value="GroEL-like equatorial domain"/>
    <property type="match status" value="1"/>
</dbReference>
<dbReference type="Gene3D" id="3.30.260.10">
    <property type="entry name" value="TCP-1-like chaperonin intermediate domain"/>
    <property type="match status" value="1"/>
</dbReference>
<dbReference type="HAMAP" id="MF_00600">
    <property type="entry name" value="CH60"/>
    <property type="match status" value="1"/>
</dbReference>
<dbReference type="InterPro" id="IPR018370">
    <property type="entry name" value="Chaperonin_Cpn60_CS"/>
</dbReference>
<dbReference type="InterPro" id="IPR001844">
    <property type="entry name" value="Cpn60/GroEL"/>
</dbReference>
<dbReference type="InterPro" id="IPR002423">
    <property type="entry name" value="Cpn60/GroEL/TCP-1"/>
</dbReference>
<dbReference type="InterPro" id="IPR027409">
    <property type="entry name" value="GroEL-like_apical_dom_sf"/>
</dbReference>
<dbReference type="InterPro" id="IPR027413">
    <property type="entry name" value="GROEL-like_equatorial_sf"/>
</dbReference>
<dbReference type="InterPro" id="IPR027410">
    <property type="entry name" value="TCP-1-like_intermed_sf"/>
</dbReference>
<dbReference type="NCBIfam" id="TIGR02348">
    <property type="entry name" value="GroEL"/>
    <property type="match status" value="1"/>
</dbReference>
<dbReference type="NCBIfam" id="NF000592">
    <property type="entry name" value="PRK00013.1"/>
    <property type="match status" value="1"/>
</dbReference>
<dbReference type="NCBIfam" id="NF009487">
    <property type="entry name" value="PRK12849.1"/>
    <property type="match status" value="1"/>
</dbReference>
<dbReference type="NCBIfam" id="NF009488">
    <property type="entry name" value="PRK12850.1"/>
    <property type="match status" value="1"/>
</dbReference>
<dbReference type="NCBIfam" id="NF009489">
    <property type="entry name" value="PRK12851.1"/>
    <property type="match status" value="1"/>
</dbReference>
<dbReference type="PANTHER" id="PTHR45633">
    <property type="entry name" value="60 KDA HEAT SHOCK PROTEIN, MITOCHONDRIAL"/>
    <property type="match status" value="1"/>
</dbReference>
<dbReference type="Pfam" id="PF00118">
    <property type="entry name" value="Cpn60_TCP1"/>
    <property type="match status" value="1"/>
</dbReference>
<dbReference type="PRINTS" id="PR00298">
    <property type="entry name" value="CHAPERONIN60"/>
</dbReference>
<dbReference type="SUPFAM" id="SSF52029">
    <property type="entry name" value="GroEL apical domain-like"/>
    <property type="match status" value="1"/>
</dbReference>
<dbReference type="SUPFAM" id="SSF48592">
    <property type="entry name" value="GroEL equatorial domain-like"/>
    <property type="match status" value="1"/>
</dbReference>
<dbReference type="SUPFAM" id="SSF54849">
    <property type="entry name" value="GroEL-intermediate domain like"/>
    <property type="match status" value="1"/>
</dbReference>
<dbReference type="PROSITE" id="PS00296">
    <property type="entry name" value="CHAPERONINS_CPN60"/>
    <property type="match status" value="1"/>
</dbReference>
<reference key="1">
    <citation type="journal article" date="2000" name="Nature">
        <title>The genome sequence of the plant pathogen Xylella fastidiosa.</title>
        <authorList>
            <person name="Simpson A.J.G."/>
            <person name="Reinach F.C."/>
            <person name="Arruda P."/>
            <person name="Abreu F.A."/>
            <person name="Acencio M."/>
            <person name="Alvarenga R."/>
            <person name="Alves L.M.C."/>
            <person name="Araya J.E."/>
            <person name="Baia G.S."/>
            <person name="Baptista C.S."/>
            <person name="Barros M.H."/>
            <person name="Bonaccorsi E.D."/>
            <person name="Bordin S."/>
            <person name="Bove J.M."/>
            <person name="Briones M.R.S."/>
            <person name="Bueno M.R.P."/>
            <person name="Camargo A.A."/>
            <person name="Camargo L.E.A."/>
            <person name="Carraro D.M."/>
            <person name="Carrer H."/>
            <person name="Colauto N.B."/>
            <person name="Colombo C."/>
            <person name="Costa F.F."/>
            <person name="Costa M.C.R."/>
            <person name="Costa-Neto C.M."/>
            <person name="Coutinho L.L."/>
            <person name="Cristofani M."/>
            <person name="Dias-Neto E."/>
            <person name="Docena C."/>
            <person name="El-Dorry H."/>
            <person name="Facincani A.P."/>
            <person name="Ferreira A.J.S."/>
            <person name="Ferreira V.C.A."/>
            <person name="Ferro J.A."/>
            <person name="Fraga J.S."/>
            <person name="Franca S.C."/>
            <person name="Franco M.C."/>
            <person name="Frohme M."/>
            <person name="Furlan L.R."/>
            <person name="Garnier M."/>
            <person name="Goldman G.H."/>
            <person name="Goldman M.H.S."/>
            <person name="Gomes S.L."/>
            <person name="Gruber A."/>
            <person name="Ho P.L."/>
            <person name="Hoheisel J.D."/>
            <person name="Junqueira M.L."/>
            <person name="Kemper E.L."/>
            <person name="Kitajima J.P."/>
            <person name="Krieger J.E."/>
            <person name="Kuramae E.E."/>
            <person name="Laigret F."/>
            <person name="Lambais M.R."/>
            <person name="Leite L.C.C."/>
            <person name="Lemos E.G.M."/>
            <person name="Lemos M.V.F."/>
            <person name="Lopes S.A."/>
            <person name="Lopes C.R."/>
            <person name="Machado J.A."/>
            <person name="Machado M.A."/>
            <person name="Madeira A.M.B.N."/>
            <person name="Madeira H.M.F."/>
            <person name="Marino C.L."/>
            <person name="Marques M.V."/>
            <person name="Martins E.A.L."/>
            <person name="Martins E.M.F."/>
            <person name="Matsukuma A.Y."/>
            <person name="Menck C.F.M."/>
            <person name="Miracca E.C."/>
            <person name="Miyaki C.Y."/>
            <person name="Monteiro-Vitorello C.B."/>
            <person name="Moon D.H."/>
            <person name="Nagai M.A."/>
            <person name="Nascimento A.L.T.O."/>
            <person name="Netto L.E.S."/>
            <person name="Nhani A. Jr."/>
            <person name="Nobrega F.G."/>
            <person name="Nunes L.R."/>
            <person name="Oliveira M.A."/>
            <person name="de Oliveira M.C."/>
            <person name="de Oliveira R.C."/>
            <person name="Palmieri D.A."/>
            <person name="Paris A."/>
            <person name="Peixoto B.R."/>
            <person name="Pereira G.A.G."/>
            <person name="Pereira H.A. Jr."/>
            <person name="Pesquero J.B."/>
            <person name="Quaggio R.B."/>
            <person name="Roberto P.G."/>
            <person name="Rodrigues V."/>
            <person name="de Rosa A.J.M."/>
            <person name="de Rosa V.E. Jr."/>
            <person name="de Sa R.G."/>
            <person name="Santelli R.V."/>
            <person name="Sawasaki H.E."/>
            <person name="da Silva A.C.R."/>
            <person name="da Silva A.M."/>
            <person name="da Silva F.R."/>
            <person name="Silva W.A. Jr."/>
            <person name="da Silveira J.F."/>
            <person name="Silvestri M.L.Z."/>
            <person name="Siqueira W.J."/>
            <person name="de Souza A.A."/>
            <person name="de Souza A.P."/>
            <person name="Terenzi M.F."/>
            <person name="Truffi D."/>
            <person name="Tsai S.M."/>
            <person name="Tsuhako M.H."/>
            <person name="Vallada H."/>
            <person name="Van Sluys M.A."/>
            <person name="Verjovski-Almeida S."/>
            <person name="Vettore A.L."/>
            <person name="Zago M.A."/>
            <person name="Zatz M."/>
            <person name="Meidanis J."/>
            <person name="Setubal J.C."/>
        </authorList>
    </citation>
    <scope>NUCLEOTIDE SEQUENCE [LARGE SCALE GENOMIC DNA]</scope>
    <source>
        <strain>9a5c</strain>
    </source>
</reference>
<proteinExistence type="inferred from homology"/>
<keyword id="KW-0067">ATP-binding</keyword>
<keyword id="KW-0143">Chaperone</keyword>
<keyword id="KW-0963">Cytoplasm</keyword>
<keyword id="KW-0413">Isomerase</keyword>
<keyword id="KW-0547">Nucleotide-binding</keyword>
<accession>Q9PFP2</accession>
<feature type="chain" id="PRO_0000063610" description="Chaperonin GroEL">
    <location>
        <begin position="1"/>
        <end position="547"/>
    </location>
</feature>
<feature type="region of interest" description="Disordered" evidence="2">
    <location>
        <begin position="524"/>
        <end position="547"/>
    </location>
</feature>
<feature type="compositionally biased region" description="Gly residues" evidence="2">
    <location>
        <begin position="535"/>
        <end position="547"/>
    </location>
</feature>
<feature type="binding site" evidence="1">
    <location>
        <begin position="30"/>
        <end position="33"/>
    </location>
    <ligand>
        <name>ATP</name>
        <dbReference type="ChEBI" id="CHEBI:30616"/>
    </ligand>
</feature>
<feature type="binding site" evidence="1">
    <location>
        <position position="51"/>
    </location>
    <ligand>
        <name>ATP</name>
        <dbReference type="ChEBI" id="CHEBI:30616"/>
    </ligand>
</feature>
<feature type="binding site" evidence="1">
    <location>
        <begin position="87"/>
        <end position="91"/>
    </location>
    <ligand>
        <name>ATP</name>
        <dbReference type="ChEBI" id="CHEBI:30616"/>
    </ligand>
</feature>
<feature type="binding site" evidence="1">
    <location>
        <position position="415"/>
    </location>
    <ligand>
        <name>ATP</name>
        <dbReference type="ChEBI" id="CHEBI:30616"/>
    </ligand>
</feature>
<feature type="binding site" evidence="1">
    <location>
        <begin position="479"/>
        <end position="481"/>
    </location>
    <ligand>
        <name>ATP</name>
        <dbReference type="ChEBI" id="CHEBI:30616"/>
    </ligand>
</feature>
<feature type="binding site" evidence="1">
    <location>
        <position position="495"/>
    </location>
    <ligand>
        <name>ATP</name>
        <dbReference type="ChEBI" id="CHEBI:30616"/>
    </ligand>
</feature>
<name>CH60_XYLFA</name>
<sequence length="547" mass="57757">MAAKEIIFSEKARSRMVHGVNLLANAVKATLGPKGRHVVLDKSFGSPIITKDGVSVAKEIELADKFENMGAQMLKEVASKTNDHAGDGTTTATVLAQALIREGCKAVAAGMNPMDLKRGIDKAVIAAVTELKKISKPTSDDKAIAQVATISANSDESIGNIIAEAMKKVGKEGVITIEEGTTLENELDVVEGMQFDRGYSSPYFINNQQSQIVELDNPYILLHDKKISSVRDLLTVLDAVAKESKPLLIVAEEVEGEALATLVVNNIRGIIKVCAVKAPGFGDRRKAMLEDMAVLTGGTVISEEVGLSLEKATTSHLGKAKKVRVSKENTTIIDGIGDNDAINGRVKQIKTQIEETTSDYDREKLQERVAKLAGGVAVIKVGAATEVEMKEKKARVDDALLATRAAVEEGVIPGGGVALIRAITAISNLKGANEDQTHGIQIALRAMEAPLREIVANAGEEPSVILNKVKEGKDNFGYNAATGEFGDMVNLGILDPTKVTRSALQNAASIAGLMITTEAMVAEAPKKDEPTPPAAGGGMGGMGGMDF</sequence>
<protein>
    <recommendedName>
        <fullName evidence="1">Chaperonin GroEL</fullName>
        <ecNumber evidence="1">5.6.1.7</ecNumber>
    </recommendedName>
    <alternativeName>
        <fullName evidence="1">60 kDa chaperonin</fullName>
    </alternativeName>
    <alternativeName>
        <fullName evidence="1">Chaperonin-60</fullName>
        <shortName evidence="1">Cpn60</shortName>
    </alternativeName>
</protein>
<comment type="function">
    <text evidence="1">Together with its co-chaperonin GroES, plays an essential role in assisting protein folding. The GroEL-GroES system forms a nano-cage that allows encapsulation of the non-native substrate proteins and provides a physical environment optimized to promote and accelerate protein folding.</text>
</comment>
<comment type="catalytic activity">
    <reaction evidence="1">
        <text>ATP + H2O + a folded polypeptide = ADP + phosphate + an unfolded polypeptide.</text>
        <dbReference type="EC" id="5.6.1.7"/>
    </reaction>
</comment>
<comment type="subunit">
    <text evidence="1">Forms a cylinder of 14 subunits composed of two heptameric rings stacked back-to-back. Interacts with the co-chaperonin GroES.</text>
</comment>
<comment type="subcellular location">
    <subcellularLocation>
        <location evidence="1">Cytoplasm</location>
    </subcellularLocation>
</comment>
<comment type="similarity">
    <text evidence="1">Belongs to the chaperonin (HSP60) family.</text>
</comment>
<gene>
    <name evidence="1" type="primary">groEL</name>
    <name evidence="1" type="synonym">groL</name>
    <name type="ordered locus">XF_0615</name>
</gene>
<organism>
    <name type="scientific">Xylella fastidiosa (strain 9a5c)</name>
    <dbReference type="NCBI Taxonomy" id="160492"/>
    <lineage>
        <taxon>Bacteria</taxon>
        <taxon>Pseudomonadati</taxon>
        <taxon>Pseudomonadota</taxon>
        <taxon>Gammaproteobacteria</taxon>
        <taxon>Lysobacterales</taxon>
        <taxon>Lysobacteraceae</taxon>
        <taxon>Xylella</taxon>
    </lineage>
</organism>
<evidence type="ECO:0000255" key="1">
    <source>
        <dbReference type="HAMAP-Rule" id="MF_00600"/>
    </source>
</evidence>
<evidence type="ECO:0000256" key="2">
    <source>
        <dbReference type="SAM" id="MobiDB-lite"/>
    </source>
</evidence>